<name>RECF_BACTN</name>
<organism>
    <name type="scientific">Bacteroides thetaiotaomicron (strain ATCC 29148 / DSM 2079 / JCM 5827 / CCUG 10774 / NCTC 10582 / VPI-5482 / E50)</name>
    <dbReference type="NCBI Taxonomy" id="226186"/>
    <lineage>
        <taxon>Bacteria</taxon>
        <taxon>Pseudomonadati</taxon>
        <taxon>Bacteroidota</taxon>
        <taxon>Bacteroidia</taxon>
        <taxon>Bacteroidales</taxon>
        <taxon>Bacteroidaceae</taxon>
        <taxon>Bacteroides</taxon>
    </lineage>
</organism>
<comment type="function">
    <text evidence="1">The RecF protein is involved in DNA metabolism; it is required for DNA replication and normal SOS inducibility. RecF binds preferentially to single-stranded, linear DNA. It also seems to bind ATP.</text>
</comment>
<comment type="subcellular location">
    <subcellularLocation>
        <location evidence="1">Cytoplasm</location>
    </subcellularLocation>
</comment>
<comment type="similarity">
    <text evidence="1">Belongs to the RecF family.</text>
</comment>
<accession>Q89ZW6</accession>
<keyword id="KW-0067">ATP-binding</keyword>
<keyword id="KW-0963">Cytoplasm</keyword>
<keyword id="KW-0227">DNA damage</keyword>
<keyword id="KW-0234">DNA repair</keyword>
<keyword id="KW-0235">DNA replication</keyword>
<keyword id="KW-0238">DNA-binding</keyword>
<keyword id="KW-0547">Nucleotide-binding</keyword>
<keyword id="KW-1185">Reference proteome</keyword>
<keyword id="KW-0742">SOS response</keyword>
<gene>
    <name evidence="1" type="primary">recF</name>
    <name type="ordered locus">BT_4255</name>
</gene>
<evidence type="ECO:0000255" key="1">
    <source>
        <dbReference type="HAMAP-Rule" id="MF_00365"/>
    </source>
</evidence>
<protein>
    <recommendedName>
        <fullName evidence="1">DNA replication and repair protein RecF</fullName>
    </recommendedName>
</protein>
<sequence>MILKRISILNYKNLEQVEIGFSAKLNCFFGQNGMGKTNLLDAVYFLSFCKSSGNPIDSQNIRHEQDFFVIQGFYEAEDGTPEEIYCGMKRRSKKQFKRNKKEYSRFSDHIGFLPLVMVSPADSELIAGGSDERRRFMDVVISQYDKEYLEALIRYNKALAQRNTLLKSEFPVEEELFLVWEEMMAQAGEIVFRKREAFIEEFIPIFQSFYSFISQDKEQVGLSYDSHARDASLLEVLKQSRERDKIMGFSLRGIHKDELNMLLGDFPIKKEGSQGQNKTYLVALKLAQFDFLKRTGQTVPLLLLDDIFDKLDASRVEQIVKLVAGDNFGQIFITDTNREHLDRILQKVGSDYKVFRVDQGVINEMGAEQ</sequence>
<proteinExistence type="inferred from homology"/>
<reference key="1">
    <citation type="journal article" date="2003" name="Science">
        <title>A genomic view of the human-Bacteroides thetaiotaomicron symbiosis.</title>
        <authorList>
            <person name="Xu J."/>
            <person name="Bjursell M.K."/>
            <person name="Himrod J."/>
            <person name="Deng S."/>
            <person name="Carmichael L.K."/>
            <person name="Chiang H.C."/>
            <person name="Hooper L.V."/>
            <person name="Gordon J.I."/>
        </authorList>
    </citation>
    <scope>NUCLEOTIDE SEQUENCE [LARGE SCALE GENOMIC DNA]</scope>
    <source>
        <strain>ATCC 29148 / DSM 2079 / JCM 5827 / CCUG 10774 / NCTC 10582 / VPI-5482 / E50</strain>
    </source>
</reference>
<dbReference type="EMBL" id="AE015928">
    <property type="protein sequence ID" value="AAO79360.1"/>
    <property type="molecule type" value="Genomic_DNA"/>
</dbReference>
<dbReference type="RefSeq" id="NP_813166.1">
    <property type="nucleotide sequence ID" value="NC_004663.1"/>
</dbReference>
<dbReference type="RefSeq" id="WP_008759932.1">
    <property type="nucleotide sequence ID" value="NZ_UYXG01000012.1"/>
</dbReference>
<dbReference type="SMR" id="Q89ZW6"/>
<dbReference type="FunCoup" id="Q89ZW6">
    <property type="interactions" value="175"/>
</dbReference>
<dbReference type="STRING" id="226186.BT_4255"/>
<dbReference type="PaxDb" id="226186-BT_4255"/>
<dbReference type="EnsemblBacteria" id="AAO79360">
    <property type="protein sequence ID" value="AAO79360"/>
    <property type="gene ID" value="BT_4255"/>
</dbReference>
<dbReference type="GeneID" id="60925432"/>
<dbReference type="KEGG" id="bth:BT_4255"/>
<dbReference type="PATRIC" id="fig|226186.12.peg.4327"/>
<dbReference type="eggNOG" id="COG1195">
    <property type="taxonomic scope" value="Bacteria"/>
</dbReference>
<dbReference type="HOGENOM" id="CLU_040267_0_1_10"/>
<dbReference type="InParanoid" id="Q89ZW6"/>
<dbReference type="OrthoDB" id="9803889at2"/>
<dbReference type="Proteomes" id="UP000001414">
    <property type="component" value="Chromosome"/>
</dbReference>
<dbReference type="GO" id="GO:0005737">
    <property type="term" value="C:cytoplasm"/>
    <property type="evidence" value="ECO:0007669"/>
    <property type="project" value="UniProtKB-SubCell"/>
</dbReference>
<dbReference type="GO" id="GO:0005524">
    <property type="term" value="F:ATP binding"/>
    <property type="evidence" value="ECO:0007669"/>
    <property type="project" value="UniProtKB-UniRule"/>
</dbReference>
<dbReference type="GO" id="GO:0003697">
    <property type="term" value="F:single-stranded DNA binding"/>
    <property type="evidence" value="ECO:0007669"/>
    <property type="project" value="UniProtKB-UniRule"/>
</dbReference>
<dbReference type="GO" id="GO:0006260">
    <property type="term" value="P:DNA replication"/>
    <property type="evidence" value="ECO:0007669"/>
    <property type="project" value="UniProtKB-UniRule"/>
</dbReference>
<dbReference type="GO" id="GO:0000731">
    <property type="term" value="P:DNA synthesis involved in DNA repair"/>
    <property type="evidence" value="ECO:0000318"/>
    <property type="project" value="GO_Central"/>
</dbReference>
<dbReference type="GO" id="GO:0006302">
    <property type="term" value="P:double-strand break repair"/>
    <property type="evidence" value="ECO:0000318"/>
    <property type="project" value="GO_Central"/>
</dbReference>
<dbReference type="GO" id="GO:0009432">
    <property type="term" value="P:SOS response"/>
    <property type="evidence" value="ECO:0007669"/>
    <property type="project" value="UniProtKB-UniRule"/>
</dbReference>
<dbReference type="FunFam" id="1.20.1050.90:FF:000005">
    <property type="entry name" value="DNA replication and repair protein RecF"/>
    <property type="match status" value="1"/>
</dbReference>
<dbReference type="Gene3D" id="3.40.50.300">
    <property type="entry name" value="P-loop containing nucleotide triphosphate hydrolases"/>
    <property type="match status" value="1"/>
</dbReference>
<dbReference type="Gene3D" id="1.20.1050.90">
    <property type="entry name" value="RecF/RecN/SMC, N-terminal domain"/>
    <property type="match status" value="1"/>
</dbReference>
<dbReference type="HAMAP" id="MF_00365">
    <property type="entry name" value="RecF"/>
    <property type="match status" value="1"/>
</dbReference>
<dbReference type="InterPro" id="IPR001238">
    <property type="entry name" value="DNA-binding_RecF"/>
</dbReference>
<dbReference type="InterPro" id="IPR018078">
    <property type="entry name" value="DNA-binding_RecF_CS"/>
</dbReference>
<dbReference type="InterPro" id="IPR027417">
    <property type="entry name" value="P-loop_NTPase"/>
</dbReference>
<dbReference type="InterPro" id="IPR003395">
    <property type="entry name" value="RecF/RecN/SMC_N"/>
</dbReference>
<dbReference type="InterPro" id="IPR042174">
    <property type="entry name" value="RecF_2"/>
</dbReference>
<dbReference type="NCBIfam" id="TIGR00611">
    <property type="entry name" value="recf"/>
    <property type="match status" value="1"/>
</dbReference>
<dbReference type="PANTHER" id="PTHR32182">
    <property type="entry name" value="DNA REPLICATION AND REPAIR PROTEIN RECF"/>
    <property type="match status" value="1"/>
</dbReference>
<dbReference type="PANTHER" id="PTHR32182:SF0">
    <property type="entry name" value="DNA REPLICATION AND REPAIR PROTEIN RECF"/>
    <property type="match status" value="1"/>
</dbReference>
<dbReference type="Pfam" id="PF02463">
    <property type="entry name" value="SMC_N"/>
    <property type="match status" value="1"/>
</dbReference>
<dbReference type="SUPFAM" id="SSF52540">
    <property type="entry name" value="P-loop containing nucleoside triphosphate hydrolases"/>
    <property type="match status" value="1"/>
</dbReference>
<dbReference type="PROSITE" id="PS00617">
    <property type="entry name" value="RECF_1"/>
    <property type="match status" value="1"/>
</dbReference>
<dbReference type="PROSITE" id="PS00618">
    <property type="entry name" value="RECF_2"/>
    <property type="match status" value="1"/>
</dbReference>
<feature type="chain" id="PRO_0000196399" description="DNA replication and repair protein RecF">
    <location>
        <begin position="1"/>
        <end position="369"/>
    </location>
</feature>
<feature type="binding site" evidence="1">
    <location>
        <begin position="30"/>
        <end position="37"/>
    </location>
    <ligand>
        <name>ATP</name>
        <dbReference type="ChEBI" id="CHEBI:30616"/>
    </ligand>
</feature>